<name>GLPK_SHESA</name>
<dbReference type="EC" id="2.7.1.30" evidence="1"/>
<dbReference type="EMBL" id="CP000469">
    <property type="protein sequence ID" value="ABK49974.1"/>
    <property type="molecule type" value="Genomic_DNA"/>
</dbReference>
<dbReference type="RefSeq" id="WP_011718505.1">
    <property type="nucleotide sequence ID" value="NC_008577.1"/>
</dbReference>
<dbReference type="SMR" id="A0L1Q5"/>
<dbReference type="STRING" id="94122.Shewana3_3756"/>
<dbReference type="KEGG" id="shn:Shewana3_3756"/>
<dbReference type="eggNOG" id="COG0554">
    <property type="taxonomic scope" value="Bacteria"/>
</dbReference>
<dbReference type="HOGENOM" id="CLU_009281_2_3_6"/>
<dbReference type="OrthoDB" id="9805576at2"/>
<dbReference type="UniPathway" id="UPA00618">
    <property type="reaction ID" value="UER00672"/>
</dbReference>
<dbReference type="Proteomes" id="UP000002589">
    <property type="component" value="Chromosome"/>
</dbReference>
<dbReference type="GO" id="GO:0005829">
    <property type="term" value="C:cytosol"/>
    <property type="evidence" value="ECO:0007669"/>
    <property type="project" value="TreeGrafter"/>
</dbReference>
<dbReference type="GO" id="GO:0005524">
    <property type="term" value="F:ATP binding"/>
    <property type="evidence" value="ECO:0007669"/>
    <property type="project" value="UniProtKB-UniRule"/>
</dbReference>
<dbReference type="GO" id="GO:0004370">
    <property type="term" value="F:glycerol kinase activity"/>
    <property type="evidence" value="ECO:0000250"/>
    <property type="project" value="UniProtKB"/>
</dbReference>
<dbReference type="GO" id="GO:0019563">
    <property type="term" value="P:glycerol catabolic process"/>
    <property type="evidence" value="ECO:0007669"/>
    <property type="project" value="UniProtKB-UniRule"/>
</dbReference>
<dbReference type="GO" id="GO:0006071">
    <property type="term" value="P:glycerol metabolic process"/>
    <property type="evidence" value="ECO:0000250"/>
    <property type="project" value="UniProtKB"/>
</dbReference>
<dbReference type="GO" id="GO:0006072">
    <property type="term" value="P:glycerol-3-phosphate metabolic process"/>
    <property type="evidence" value="ECO:0007669"/>
    <property type="project" value="InterPro"/>
</dbReference>
<dbReference type="CDD" id="cd07786">
    <property type="entry name" value="FGGY_EcGK_like"/>
    <property type="match status" value="1"/>
</dbReference>
<dbReference type="FunFam" id="3.30.420.40:FF:000007">
    <property type="entry name" value="Glycerol kinase"/>
    <property type="match status" value="1"/>
</dbReference>
<dbReference type="FunFam" id="3.30.420.40:FF:000008">
    <property type="entry name" value="Glycerol kinase"/>
    <property type="match status" value="1"/>
</dbReference>
<dbReference type="Gene3D" id="3.30.420.40">
    <property type="match status" value="2"/>
</dbReference>
<dbReference type="HAMAP" id="MF_00186">
    <property type="entry name" value="Glycerol_kin"/>
    <property type="match status" value="1"/>
</dbReference>
<dbReference type="InterPro" id="IPR043129">
    <property type="entry name" value="ATPase_NBD"/>
</dbReference>
<dbReference type="InterPro" id="IPR000577">
    <property type="entry name" value="Carb_kinase_FGGY"/>
</dbReference>
<dbReference type="InterPro" id="IPR018483">
    <property type="entry name" value="Carb_kinase_FGGY_CS"/>
</dbReference>
<dbReference type="InterPro" id="IPR018485">
    <property type="entry name" value="FGGY_C"/>
</dbReference>
<dbReference type="InterPro" id="IPR018484">
    <property type="entry name" value="FGGY_N"/>
</dbReference>
<dbReference type="InterPro" id="IPR005999">
    <property type="entry name" value="Glycerol_kin"/>
</dbReference>
<dbReference type="NCBIfam" id="TIGR01311">
    <property type="entry name" value="glycerol_kin"/>
    <property type="match status" value="1"/>
</dbReference>
<dbReference type="NCBIfam" id="NF000756">
    <property type="entry name" value="PRK00047.1"/>
    <property type="match status" value="1"/>
</dbReference>
<dbReference type="PANTHER" id="PTHR10196:SF69">
    <property type="entry name" value="GLYCEROL KINASE"/>
    <property type="match status" value="1"/>
</dbReference>
<dbReference type="PANTHER" id="PTHR10196">
    <property type="entry name" value="SUGAR KINASE"/>
    <property type="match status" value="1"/>
</dbReference>
<dbReference type="Pfam" id="PF02782">
    <property type="entry name" value="FGGY_C"/>
    <property type="match status" value="1"/>
</dbReference>
<dbReference type="Pfam" id="PF00370">
    <property type="entry name" value="FGGY_N"/>
    <property type="match status" value="1"/>
</dbReference>
<dbReference type="PIRSF" id="PIRSF000538">
    <property type="entry name" value="GlpK"/>
    <property type="match status" value="1"/>
</dbReference>
<dbReference type="SUPFAM" id="SSF53067">
    <property type="entry name" value="Actin-like ATPase domain"/>
    <property type="match status" value="2"/>
</dbReference>
<dbReference type="PROSITE" id="PS00933">
    <property type="entry name" value="FGGY_KINASES_1"/>
    <property type="match status" value="1"/>
</dbReference>
<dbReference type="PROSITE" id="PS00445">
    <property type="entry name" value="FGGY_KINASES_2"/>
    <property type="match status" value="1"/>
</dbReference>
<proteinExistence type="inferred from homology"/>
<feature type="chain" id="PRO_1000020782" description="Glycerol kinase">
    <location>
        <begin position="1"/>
        <end position="494"/>
    </location>
</feature>
<feature type="binding site" evidence="1">
    <location>
        <position position="13"/>
    </location>
    <ligand>
        <name>ADP</name>
        <dbReference type="ChEBI" id="CHEBI:456216"/>
    </ligand>
</feature>
<feature type="binding site" evidence="1">
    <location>
        <position position="13"/>
    </location>
    <ligand>
        <name>ATP</name>
        <dbReference type="ChEBI" id="CHEBI:30616"/>
    </ligand>
</feature>
<feature type="binding site" evidence="1">
    <location>
        <position position="13"/>
    </location>
    <ligand>
        <name>sn-glycerol 3-phosphate</name>
        <dbReference type="ChEBI" id="CHEBI:57597"/>
    </ligand>
</feature>
<feature type="binding site" evidence="1">
    <location>
        <position position="14"/>
    </location>
    <ligand>
        <name>ATP</name>
        <dbReference type="ChEBI" id="CHEBI:30616"/>
    </ligand>
</feature>
<feature type="binding site" evidence="1">
    <location>
        <position position="15"/>
    </location>
    <ligand>
        <name>ATP</name>
        <dbReference type="ChEBI" id="CHEBI:30616"/>
    </ligand>
</feature>
<feature type="binding site" evidence="1">
    <location>
        <position position="17"/>
    </location>
    <ligand>
        <name>ADP</name>
        <dbReference type="ChEBI" id="CHEBI:456216"/>
    </ligand>
</feature>
<feature type="binding site" evidence="1">
    <location>
        <position position="83"/>
    </location>
    <ligand>
        <name>glycerol</name>
        <dbReference type="ChEBI" id="CHEBI:17754"/>
    </ligand>
</feature>
<feature type="binding site" evidence="1">
    <location>
        <position position="83"/>
    </location>
    <ligand>
        <name>sn-glycerol 3-phosphate</name>
        <dbReference type="ChEBI" id="CHEBI:57597"/>
    </ligand>
</feature>
<feature type="binding site" evidence="1">
    <location>
        <position position="84"/>
    </location>
    <ligand>
        <name>glycerol</name>
        <dbReference type="ChEBI" id="CHEBI:17754"/>
    </ligand>
</feature>
<feature type="binding site" evidence="1">
    <location>
        <position position="84"/>
    </location>
    <ligand>
        <name>sn-glycerol 3-phosphate</name>
        <dbReference type="ChEBI" id="CHEBI:57597"/>
    </ligand>
</feature>
<feature type="binding site" evidence="1">
    <location>
        <position position="135"/>
    </location>
    <ligand>
        <name>glycerol</name>
        <dbReference type="ChEBI" id="CHEBI:17754"/>
    </ligand>
</feature>
<feature type="binding site" evidence="1">
    <location>
        <position position="135"/>
    </location>
    <ligand>
        <name>sn-glycerol 3-phosphate</name>
        <dbReference type="ChEBI" id="CHEBI:57597"/>
    </ligand>
</feature>
<feature type="binding site" evidence="1">
    <location>
        <position position="244"/>
    </location>
    <ligand>
        <name>glycerol</name>
        <dbReference type="ChEBI" id="CHEBI:17754"/>
    </ligand>
</feature>
<feature type="binding site" evidence="1">
    <location>
        <position position="244"/>
    </location>
    <ligand>
        <name>sn-glycerol 3-phosphate</name>
        <dbReference type="ChEBI" id="CHEBI:57597"/>
    </ligand>
</feature>
<feature type="binding site" evidence="1">
    <location>
        <position position="245"/>
    </location>
    <ligand>
        <name>glycerol</name>
        <dbReference type="ChEBI" id="CHEBI:17754"/>
    </ligand>
</feature>
<feature type="binding site" evidence="1">
    <location>
        <position position="266"/>
    </location>
    <ligand>
        <name>ADP</name>
        <dbReference type="ChEBI" id="CHEBI:456216"/>
    </ligand>
</feature>
<feature type="binding site" evidence="1">
    <location>
        <position position="266"/>
    </location>
    <ligand>
        <name>ATP</name>
        <dbReference type="ChEBI" id="CHEBI:30616"/>
    </ligand>
</feature>
<feature type="binding site" evidence="1">
    <location>
        <position position="309"/>
    </location>
    <ligand>
        <name>ADP</name>
        <dbReference type="ChEBI" id="CHEBI:456216"/>
    </ligand>
</feature>
<feature type="binding site" evidence="1">
    <location>
        <position position="309"/>
    </location>
    <ligand>
        <name>ATP</name>
        <dbReference type="ChEBI" id="CHEBI:30616"/>
    </ligand>
</feature>
<feature type="binding site" evidence="1">
    <location>
        <position position="313"/>
    </location>
    <ligand>
        <name>ATP</name>
        <dbReference type="ChEBI" id="CHEBI:30616"/>
    </ligand>
</feature>
<feature type="binding site" evidence="1">
    <location>
        <position position="410"/>
    </location>
    <ligand>
        <name>ADP</name>
        <dbReference type="ChEBI" id="CHEBI:456216"/>
    </ligand>
</feature>
<feature type="binding site" evidence="1">
    <location>
        <position position="410"/>
    </location>
    <ligand>
        <name>ATP</name>
        <dbReference type="ChEBI" id="CHEBI:30616"/>
    </ligand>
</feature>
<feature type="binding site" evidence="1">
    <location>
        <position position="414"/>
    </location>
    <ligand>
        <name>ADP</name>
        <dbReference type="ChEBI" id="CHEBI:456216"/>
    </ligand>
</feature>
<reference key="1">
    <citation type="submission" date="2006-09" db="EMBL/GenBank/DDBJ databases">
        <title>Complete sequence of chromosome 1 of Shewanella sp. ANA-3.</title>
        <authorList>
            <person name="Copeland A."/>
            <person name="Lucas S."/>
            <person name="Lapidus A."/>
            <person name="Barry K."/>
            <person name="Detter J.C."/>
            <person name="Glavina del Rio T."/>
            <person name="Hammon N."/>
            <person name="Israni S."/>
            <person name="Dalin E."/>
            <person name="Tice H."/>
            <person name="Pitluck S."/>
            <person name="Chertkov O."/>
            <person name="Brettin T."/>
            <person name="Bruce D."/>
            <person name="Han C."/>
            <person name="Tapia R."/>
            <person name="Gilna P."/>
            <person name="Schmutz J."/>
            <person name="Larimer F."/>
            <person name="Land M."/>
            <person name="Hauser L."/>
            <person name="Kyrpides N."/>
            <person name="Kim E."/>
            <person name="Newman D."/>
            <person name="Salticov C."/>
            <person name="Konstantinidis K."/>
            <person name="Klappenback J."/>
            <person name="Tiedje J."/>
            <person name="Richardson P."/>
        </authorList>
    </citation>
    <scope>NUCLEOTIDE SEQUENCE [LARGE SCALE GENOMIC DNA]</scope>
    <source>
        <strain>ANA-3</strain>
    </source>
</reference>
<keyword id="KW-0067">ATP-binding</keyword>
<keyword id="KW-0319">Glycerol metabolism</keyword>
<keyword id="KW-0418">Kinase</keyword>
<keyword id="KW-0547">Nucleotide-binding</keyword>
<keyword id="KW-0808">Transferase</keyword>
<organism>
    <name type="scientific">Shewanella sp. (strain ANA-3)</name>
    <dbReference type="NCBI Taxonomy" id="94122"/>
    <lineage>
        <taxon>Bacteria</taxon>
        <taxon>Pseudomonadati</taxon>
        <taxon>Pseudomonadota</taxon>
        <taxon>Gammaproteobacteria</taxon>
        <taxon>Alteromonadales</taxon>
        <taxon>Shewanellaceae</taxon>
        <taxon>Shewanella</taxon>
    </lineage>
</organism>
<evidence type="ECO:0000255" key="1">
    <source>
        <dbReference type="HAMAP-Rule" id="MF_00186"/>
    </source>
</evidence>
<protein>
    <recommendedName>
        <fullName evidence="1">Glycerol kinase</fullName>
        <ecNumber evidence="1">2.7.1.30</ecNumber>
    </recommendedName>
    <alternativeName>
        <fullName evidence="1">ATP:glycerol 3-phosphotransferase</fullName>
    </alternativeName>
    <alternativeName>
        <fullName evidence="1">Glycerokinase</fullName>
        <shortName evidence="1">GK</shortName>
    </alternativeName>
</protein>
<sequence>MQKKYVVALDQGTTSSRAIVFDHDANIVSVSQREFTQLYPNPGWVEHDPMEIWASQSSVLIESLARAGIHSDEVAAIGITNQRETTIIWEKDTGKPVYNAIVWQCRRSSEICEQLKAQGLEDYVRENTGLLLDPYFSGTKIKWILDNVPDARAKAKRGELLFGTVDTWLLWKLTEGKVHVTDPTNAARTLLFNIHSLSWDTKLLEALDIPAAMLPEVKPSCSVYGTTRIAGEGSEIPLAGIAGDQQAALFGQLCVEPGMAKNTYGTGCFLLMNTGNKAVRSSHGLLTTVAVGAQGEVNYALEGSVFMGGATIQWLRDELGLIRDASDTEYFASKVADTNGVYLVPAFVGLGAPYWDPNARGALFGLTRGANRNHIIRAALESIAYQSKDLLDAMIKDSGERLKSLKVDGGAVANDFLMQFQADITDVEVLRPSVCETTALGAAFLAGLAVGFWTSVTELKYKACIDKHFKPNIDASQRERLYAGWQDAVARTRS</sequence>
<comment type="function">
    <text evidence="1">Key enzyme in the regulation of glycerol uptake and metabolism. Catalyzes the phosphorylation of glycerol to yield sn-glycerol 3-phosphate.</text>
</comment>
<comment type="catalytic activity">
    <reaction evidence="1">
        <text>glycerol + ATP = sn-glycerol 3-phosphate + ADP + H(+)</text>
        <dbReference type="Rhea" id="RHEA:21644"/>
        <dbReference type="ChEBI" id="CHEBI:15378"/>
        <dbReference type="ChEBI" id="CHEBI:17754"/>
        <dbReference type="ChEBI" id="CHEBI:30616"/>
        <dbReference type="ChEBI" id="CHEBI:57597"/>
        <dbReference type="ChEBI" id="CHEBI:456216"/>
        <dbReference type="EC" id="2.7.1.30"/>
    </reaction>
</comment>
<comment type="activity regulation">
    <text evidence="1">Inhibited by fructose 1,6-bisphosphate (FBP).</text>
</comment>
<comment type="pathway">
    <text evidence="1">Polyol metabolism; glycerol degradation via glycerol kinase pathway; sn-glycerol 3-phosphate from glycerol: step 1/1.</text>
</comment>
<comment type="similarity">
    <text evidence="1">Belongs to the FGGY kinase family.</text>
</comment>
<accession>A0L1Q5</accession>
<gene>
    <name evidence="1" type="primary">glpK</name>
    <name type="ordered locus">Shewana3_3756</name>
</gene>